<keyword id="KW-1003">Cell membrane</keyword>
<keyword id="KW-0406">Ion transport</keyword>
<keyword id="KW-0472">Membrane</keyword>
<keyword id="KW-0915">Sodium</keyword>
<keyword id="KW-0739">Sodium transport</keyword>
<keyword id="KW-0769">Symport</keyword>
<keyword id="KW-0812">Transmembrane</keyword>
<keyword id="KW-1133">Transmembrane helix</keyword>
<keyword id="KW-0813">Transport</keyword>
<gene>
    <name type="primary">sdcS</name>
    <name type="ordered locus">MW1857</name>
</gene>
<accession>Q8NVS5</accession>
<name>SDCS_STAAW</name>
<organism>
    <name type="scientific">Staphylococcus aureus (strain MW2)</name>
    <dbReference type="NCBI Taxonomy" id="196620"/>
    <lineage>
        <taxon>Bacteria</taxon>
        <taxon>Bacillati</taxon>
        <taxon>Bacillota</taxon>
        <taxon>Bacilli</taxon>
        <taxon>Bacillales</taxon>
        <taxon>Staphylococcaceae</taxon>
        <taxon>Staphylococcus</taxon>
    </lineage>
</organism>
<comment type="function">
    <text evidence="1">Mediates the transport of the dicarboxylates fumarate, malate, and succinate across the cytoplasmic membrane via a Na(+)-electrochemical gradient.</text>
</comment>
<comment type="subcellular location">
    <subcellularLocation>
        <location evidence="3">Cell membrane</location>
        <topology evidence="3">Multi-pass membrane protein</topology>
    </subcellularLocation>
</comment>
<comment type="similarity">
    <text evidence="3">Belongs to the SLC13A/DASS transporter (TC 2.A.47) family. NADC subfamily.</text>
</comment>
<dbReference type="EMBL" id="BA000033">
    <property type="protein sequence ID" value="BAB95722.1"/>
    <property type="molecule type" value="Genomic_DNA"/>
</dbReference>
<dbReference type="RefSeq" id="WP_000323164.1">
    <property type="nucleotide sequence ID" value="NC_003923.1"/>
</dbReference>
<dbReference type="SMR" id="Q8NVS5"/>
<dbReference type="KEGG" id="sam:MW1857"/>
<dbReference type="HOGENOM" id="CLU_005170_0_0_9"/>
<dbReference type="GO" id="GO:0005886">
    <property type="term" value="C:plasma membrane"/>
    <property type="evidence" value="ECO:0007669"/>
    <property type="project" value="UniProtKB-SubCell"/>
</dbReference>
<dbReference type="GO" id="GO:0008514">
    <property type="term" value="F:organic anion transmembrane transporter activity"/>
    <property type="evidence" value="ECO:0007669"/>
    <property type="project" value="UniProtKB-ARBA"/>
</dbReference>
<dbReference type="GO" id="GO:0015293">
    <property type="term" value="F:symporter activity"/>
    <property type="evidence" value="ECO:0007669"/>
    <property type="project" value="UniProtKB-KW"/>
</dbReference>
<dbReference type="GO" id="GO:1905039">
    <property type="term" value="P:carboxylic acid transmembrane transport"/>
    <property type="evidence" value="ECO:0007669"/>
    <property type="project" value="UniProtKB-ARBA"/>
</dbReference>
<dbReference type="GO" id="GO:0006814">
    <property type="term" value="P:sodium ion transport"/>
    <property type="evidence" value="ECO:0007669"/>
    <property type="project" value="UniProtKB-KW"/>
</dbReference>
<dbReference type="CDD" id="cd01115">
    <property type="entry name" value="SLC13_permease"/>
    <property type="match status" value="1"/>
</dbReference>
<dbReference type="InterPro" id="IPR001898">
    <property type="entry name" value="SLC13A/DASS"/>
</dbReference>
<dbReference type="NCBIfam" id="TIGR00785">
    <property type="entry name" value="dass"/>
    <property type="match status" value="1"/>
</dbReference>
<dbReference type="PANTHER" id="PTHR10283">
    <property type="entry name" value="SOLUTE CARRIER FAMILY 13 MEMBER"/>
    <property type="match status" value="1"/>
</dbReference>
<dbReference type="PANTHER" id="PTHR10283:SF82">
    <property type="entry name" value="SOLUTE CARRIER FAMILY 13 MEMBER 2"/>
    <property type="match status" value="1"/>
</dbReference>
<dbReference type="Pfam" id="PF00939">
    <property type="entry name" value="Na_sulph_symp"/>
    <property type="match status" value="1"/>
</dbReference>
<feature type="chain" id="PRO_0000260096" description="Sodium-dependent dicarboxylate transporter SdcS">
    <location>
        <begin position="1"/>
        <end position="520"/>
    </location>
</feature>
<feature type="transmembrane region" description="Helical" evidence="2">
    <location>
        <begin position="30"/>
        <end position="50"/>
    </location>
</feature>
<feature type="transmembrane region" description="Helical" evidence="2">
    <location>
        <begin position="55"/>
        <end position="75"/>
    </location>
</feature>
<feature type="transmembrane region" description="Helical" evidence="2">
    <location>
        <begin position="77"/>
        <end position="97"/>
    </location>
</feature>
<feature type="transmembrane region" description="Helical" evidence="2">
    <location>
        <begin position="104"/>
        <end position="124"/>
    </location>
</feature>
<feature type="transmembrane region" description="Helical" evidence="2">
    <location>
        <begin position="160"/>
        <end position="180"/>
    </location>
</feature>
<feature type="transmembrane region" description="Helical" evidence="2">
    <location>
        <begin position="207"/>
        <end position="227"/>
    </location>
</feature>
<feature type="transmembrane region" description="Helical" evidence="2">
    <location>
        <begin position="242"/>
        <end position="262"/>
    </location>
</feature>
<feature type="transmembrane region" description="Helical" evidence="2">
    <location>
        <begin position="298"/>
        <end position="318"/>
    </location>
</feature>
<feature type="transmembrane region" description="Helical" evidence="2">
    <location>
        <begin position="323"/>
        <end position="343"/>
    </location>
</feature>
<feature type="transmembrane region" description="Helical" evidence="2">
    <location>
        <begin position="362"/>
        <end position="382"/>
    </location>
</feature>
<feature type="transmembrane region" description="Helical" evidence="2">
    <location>
        <begin position="399"/>
        <end position="419"/>
    </location>
</feature>
<feature type="transmembrane region" description="Helical" evidence="2">
    <location>
        <begin position="428"/>
        <end position="448"/>
    </location>
</feature>
<feature type="transmembrane region" description="Helical" evidence="2">
    <location>
        <begin position="452"/>
        <end position="472"/>
    </location>
</feature>
<feature type="transmembrane region" description="Helical" evidence="2">
    <location>
        <begin position="491"/>
        <end position="511"/>
    </location>
</feature>
<evidence type="ECO:0000250" key="1"/>
<evidence type="ECO:0000255" key="2"/>
<evidence type="ECO:0000305" key="3"/>
<sequence>MAYFNQHQSMISKRYLTFFSKSKKKKPFSAGQLIGLILGPLLFLLTLLFFHPQDLPWKGVYVLAITLWIATWWITEAIPIAATSLLPIVLLPLGHILTPEQVSSEYGNDIIFLFLGGFILAIAMERWNLHTRVALTIINLIGASTSKILLGFMVATGFLSMFVSNTAAVMIMIPIGLAIIKEAHDLQEANTNQTSIQKFEKSLVLAIGYAGTIGGLGTLIGTPPLIILKGQYMQHFGHEISFAKWMIVGIPTVIVLLGITWLYLRYVAFRHDLKYLPGGQTLIKQKLDELGKMKYEEKVVQTIFVLASLLWITREFLLKKWEVTSSVADGTIAIFISILLFVIPAKNTEKHRRIIDWEVAKELPWGVLILFGGGLALAKGISESGLAKWLGEQLKSLNGVSPILIVIVITIFVLFLTEVTSNTATATMILPILATLSVAVGVHPLLLMAPAAMAANCAYMLPVGTPPNAIIFGSGKISIKQMASVGFWVNLISAIIIILVVYYVMPIVLGIDINQPLPLK</sequence>
<proteinExistence type="inferred from homology"/>
<protein>
    <recommendedName>
        <fullName>Sodium-dependent dicarboxylate transporter SdcS</fullName>
    </recommendedName>
    <alternativeName>
        <fullName>Na(+)/dicarboxylate symporter</fullName>
    </alternativeName>
</protein>
<reference key="1">
    <citation type="journal article" date="2002" name="Lancet">
        <title>Genome and virulence determinants of high virulence community-acquired MRSA.</title>
        <authorList>
            <person name="Baba T."/>
            <person name="Takeuchi F."/>
            <person name="Kuroda M."/>
            <person name="Yuzawa H."/>
            <person name="Aoki K."/>
            <person name="Oguchi A."/>
            <person name="Nagai Y."/>
            <person name="Iwama N."/>
            <person name="Asano K."/>
            <person name="Naimi T."/>
            <person name="Kuroda H."/>
            <person name="Cui L."/>
            <person name="Yamamoto K."/>
            <person name="Hiramatsu K."/>
        </authorList>
    </citation>
    <scope>NUCLEOTIDE SEQUENCE [LARGE SCALE GENOMIC DNA]</scope>
    <source>
        <strain>MW2</strain>
    </source>
</reference>